<feature type="signal peptide" evidence="1">
    <location>
        <begin position="1"/>
        <end position="19"/>
    </location>
</feature>
<feature type="chain" id="PRO_0000022450" description="Protein SVS1">
    <location>
        <begin position="20"/>
        <end position="260"/>
    </location>
</feature>
<feature type="glycosylation site" description="N-linked (GlcNAc...) asparagine" evidence="1">
    <location>
        <position position="23"/>
    </location>
</feature>
<feature type="glycosylation site" description="N-linked (GlcNAc...) asparagine" evidence="1">
    <location>
        <position position="249"/>
    </location>
</feature>
<feature type="glycosylation site" description="N-linked (GlcNAc...) asparagine" evidence="1">
    <location>
        <position position="256"/>
    </location>
</feature>
<evidence type="ECO:0000255" key="1"/>
<evidence type="ECO:0000269" key="2">
    <source>
    </source>
</evidence>
<protein>
    <recommendedName>
        <fullName>Protein SVS1</fullName>
    </recommendedName>
</protein>
<reference key="1">
    <citation type="journal article" date="1995" name="Gene">
        <title>Cloning and characterization of the Saccharomyces cerevisiae SVS1 gene which encodes a serine- and threonine-rich protein required for vanadate resistance.</title>
        <authorList>
            <person name="Nakamura T."/>
            <person name="Namba H."/>
            <person name="Ohmoto T."/>
            <person name="Liu Y."/>
            <person name="Hirata D."/>
            <person name="Miyakawa T."/>
        </authorList>
    </citation>
    <scope>NUCLEOTIDE SEQUENCE [GENOMIC DNA]</scope>
</reference>
<reference key="2">
    <citation type="journal article" date="1996" name="Yeast">
        <title>The sequence of 55 kb on the left arm of yeast chromosome XVI identifies a small nuclear RNA, a new putative protein kinase and two new putative regulators.</title>
        <authorList>
            <person name="Purnelle B."/>
            <person name="Coster F."/>
            <person name="Goffeau A."/>
        </authorList>
    </citation>
    <scope>NUCLEOTIDE SEQUENCE [GENOMIC DNA]</scope>
    <source>
        <strain>ATCC 204511 / S288c / AB972</strain>
    </source>
</reference>
<reference key="3">
    <citation type="journal article" date="1997" name="Nature">
        <title>The nucleotide sequence of Saccharomyces cerevisiae chromosome XVI.</title>
        <authorList>
            <person name="Bussey H."/>
            <person name="Storms R.K."/>
            <person name="Ahmed A."/>
            <person name="Albermann K."/>
            <person name="Allen E."/>
            <person name="Ansorge W."/>
            <person name="Araujo R."/>
            <person name="Aparicio A."/>
            <person name="Barrell B.G."/>
            <person name="Badcock K."/>
            <person name="Benes V."/>
            <person name="Botstein D."/>
            <person name="Bowman S."/>
            <person name="Brueckner M."/>
            <person name="Carpenter J."/>
            <person name="Cherry J.M."/>
            <person name="Chung E."/>
            <person name="Churcher C.M."/>
            <person name="Coster F."/>
            <person name="Davis K."/>
            <person name="Davis R.W."/>
            <person name="Dietrich F.S."/>
            <person name="Delius H."/>
            <person name="DiPaolo T."/>
            <person name="Dubois E."/>
            <person name="Duesterhoeft A."/>
            <person name="Duncan M."/>
            <person name="Floeth M."/>
            <person name="Fortin N."/>
            <person name="Friesen J.D."/>
            <person name="Fritz C."/>
            <person name="Goffeau A."/>
            <person name="Hall J."/>
            <person name="Hebling U."/>
            <person name="Heumann K."/>
            <person name="Hilbert H."/>
            <person name="Hillier L.W."/>
            <person name="Hunicke-Smith S."/>
            <person name="Hyman R.W."/>
            <person name="Johnston M."/>
            <person name="Kalman S."/>
            <person name="Kleine K."/>
            <person name="Komp C."/>
            <person name="Kurdi O."/>
            <person name="Lashkari D."/>
            <person name="Lew H."/>
            <person name="Lin A."/>
            <person name="Lin D."/>
            <person name="Louis E.J."/>
            <person name="Marathe R."/>
            <person name="Messenguy F."/>
            <person name="Mewes H.-W."/>
            <person name="Mirtipati S."/>
            <person name="Moestl D."/>
            <person name="Mueller-Auer S."/>
            <person name="Namath A."/>
            <person name="Nentwich U."/>
            <person name="Oefner P."/>
            <person name="Pearson D."/>
            <person name="Petel F.X."/>
            <person name="Pohl T.M."/>
            <person name="Purnelle B."/>
            <person name="Rajandream M.A."/>
            <person name="Rechmann S."/>
            <person name="Rieger M."/>
            <person name="Riles L."/>
            <person name="Roberts D."/>
            <person name="Schaefer M."/>
            <person name="Scharfe M."/>
            <person name="Scherens B."/>
            <person name="Schramm S."/>
            <person name="Schroeder M."/>
            <person name="Sdicu A.-M."/>
            <person name="Tettelin H."/>
            <person name="Urrestarazu L.A."/>
            <person name="Ushinsky S."/>
            <person name="Vierendeels F."/>
            <person name="Vissers S."/>
            <person name="Voss H."/>
            <person name="Walsh S.V."/>
            <person name="Wambutt R."/>
            <person name="Wang Y."/>
            <person name="Wedler E."/>
            <person name="Wedler H."/>
            <person name="Winnett E."/>
            <person name="Zhong W.-W."/>
            <person name="Zollner A."/>
            <person name="Vo D.H."/>
            <person name="Hani J."/>
        </authorList>
    </citation>
    <scope>NUCLEOTIDE SEQUENCE [LARGE SCALE GENOMIC DNA]</scope>
    <source>
        <strain>ATCC 204508 / S288c</strain>
    </source>
</reference>
<reference key="4">
    <citation type="journal article" date="2014" name="G3 (Bethesda)">
        <title>The reference genome sequence of Saccharomyces cerevisiae: Then and now.</title>
        <authorList>
            <person name="Engel S.R."/>
            <person name="Dietrich F.S."/>
            <person name="Fisk D.G."/>
            <person name="Binkley G."/>
            <person name="Balakrishnan R."/>
            <person name="Costanzo M.C."/>
            <person name="Dwight S.S."/>
            <person name="Hitz B.C."/>
            <person name="Karra K."/>
            <person name="Nash R.S."/>
            <person name="Weng S."/>
            <person name="Wong E.D."/>
            <person name="Lloyd P."/>
            <person name="Skrzypek M.S."/>
            <person name="Miyasato S.R."/>
            <person name="Simison M."/>
            <person name="Cherry J.M."/>
        </authorList>
    </citation>
    <scope>GENOME REANNOTATION</scope>
    <source>
        <strain>ATCC 204508 / S288c</strain>
    </source>
</reference>
<reference key="5">
    <citation type="journal article" date="2007" name="Genome Res.">
        <title>Approaching a complete repository of sequence-verified protein-encoding clones for Saccharomyces cerevisiae.</title>
        <authorList>
            <person name="Hu Y."/>
            <person name="Rolfs A."/>
            <person name="Bhullar B."/>
            <person name="Murthy T.V.S."/>
            <person name="Zhu C."/>
            <person name="Berger M.F."/>
            <person name="Camargo A.A."/>
            <person name="Kelley F."/>
            <person name="McCarron S."/>
            <person name="Jepson D."/>
            <person name="Richardson A."/>
            <person name="Raphael J."/>
            <person name="Moreira D."/>
            <person name="Taycher E."/>
            <person name="Zuo D."/>
            <person name="Mohr S."/>
            <person name="Kane M.F."/>
            <person name="Williamson J."/>
            <person name="Simpson A.J.G."/>
            <person name="Bulyk M.L."/>
            <person name="Harlow E."/>
            <person name="Marsischky G."/>
            <person name="Kolodner R.D."/>
            <person name="LaBaer J."/>
        </authorList>
    </citation>
    <scope>NUCLEOTIDE SEQUENCE [GENOMIC DNA]</scope>
    <source>
        <strain>ATCC 204508 / S288c</strain>
    </source>
</reference>
<reference key="6">
    <citation type="journal article" date="2003" name="Nature">
        <title>Global analysis of protein expression in yeast.</title>
        <authorList>
            <person name="Ghaemmaghami S."/>
            <person name="Huh W.-K."/>
            <person name="Bower K."/>
            <person name="Howson R.W."/>
            <person name="Belle A."/>
            <person name="Dephoure N."/>
            <person name="O'Shea E.K."/>
            <person name="Weissman J.S."/>
        </authorList>
    </citation>
    <scope>LEVEL OF PROTEIN EXPRESSION [LARGE SCALE ANALYSIS]</scope>
</reference>
<comment type="function">
    <text>Required for vanadate resistance.</text>
</comment>
<comment type="miscellaneous">
    <text evidence="2">Present with 688 molecules/cell in log phase SD medium.</text>
</comment>
<accession>Q12254</accession>
<accession>D6W3K5</accession>
<name>SVS1_YEAST</name>
<sequence>MIFKILCSLLLVTSNFASALYVNETTSYTPYTKTLTPTYSVSPQETTLTYSDETTTFYITSTFYSTYWFTTSQSAAIISTPTASTPTASTPSLTTSTNEYTTTYSDTDTTYTSTLTSTYIITLSTESANEKAEQISTSVTEIASTVTESGSTYTSTLTSTLLVTVYNSQASNTIATSTAGDAASNVDALEKLVSAEHQSQMIQTTSADEQYCSASTKYVTVTAAAVTEVVTTTAEPVVKYVTITADASNVTGSANNGTHI</sequence>
<organism>
    <name type="scientific">Saccharomyces cerevisiae (strain ATCC 204508 / S288c)</name>
    <name type="common">Baker's yeast</name>
    <dbReference type="NCBI Taxonomy" id="559292"/>
    <lineage>
        <taxon>Eukaryota</taxon>
        <taxon>Fungi</taxon>
        <taxon>Dikarya</taxon>
        <taxon>Ascomycota</taxon>
        <taxon>Saccharomycotina</taxon>
        <taxon>Saccharomycetes</taxon>
        <taxon>Saccharomycetales</taxon>
        <taxon>Saccharomycetaceae</taxon>
        <taxon>Saccharomyces</taxon>
    </lineage>
</organism>
<proteinExistence type="evidence at protein level"/>
<keyword id="KW-0325">Glycoprotein</keyword>
<keyword id="KW-1185">Reference proteome</keyword>
<keyword id="KW-0732">Signal</keyword>
<dbReference type="EMBL" id="D50278">
    <property type="protein sequence ID" value="BAA08820.1"/>
    <property type="molecule type" value="Genomic_DNA"/>
</dbReference>
<dbReference type="EMBL" id="X96770">
    <property type="protein sequence ID" value="CAA65558.1"/>
    <property type="molecule type" value="Genomic_DNA"/>
</dbReference>
<dbReference type="EMBL" id="Z73519">
    <property type="protein sequence ID" value="CAA97868.1"/>
    <property type="molecule type" value="Genomic_DNA"/>
</dbReference>
<dbReference type="EMBL" id="AY558136">
    <property type="protein sequence ID" value="AAS56462.1"/>
    <property type="molecule type" value="Genomic_DNA"/>
</dbReference>
<dbReference type="EMBL" id="BK006949">
    <property type="protein sequence ID" value="DAA11271.1"/>
    <property type="molecule type" value="Genomic_DNA"/>
</dbReference>
<dbReference type="PIR" id="S65174">
    <property type="entry name" value="S65174"/>
</dbReference>
<dbReference type="RefSeq" id="NP_015162.1">
    <property type="nucleotide sequence ID" value="NM_001183977.1"/>
</dbReference>
<dbReference type="BioGRID" id="36020">
    <property type="interactions" value="50"/>
</dbReference>
<dbReference type="DIP" id="DIP-3989N"/>
<dbReference type="FunCoup" id="Q12254">
    <property type="interactions" value="92"/>
</dbReference>
<dbReference type="IntAct" id="Q12254">
    <property type="interactions" value="2"/>
</dbReference>
<dbReference type="STRING" id="4932.YPL163C"/>
<dbReference type="GlyCosmos" id="Q12254">
    <property type="glycosylation" value="3 sites, No reported glycans"/>
</dbReference>
<dbReference type="GlyGen" id="Q12254">
    <property type="glycosylation" value="5 sites"/>
</dbReference>
<dbReference type="PaxDb" id="4932-YPL163C"/>
<dbReference type="EnsemblFungi" id="YPL163C_mRNA">
    <property type="protein sequence ID" value="YPL163C"/>
    <property type="gene ID" value="YPL163C"/>
</dbReference>
<dbReference type="GeneID" id="855940"/>
<dbReference type="KEGG" id="sce:YPL163C"/>
<dbReference type="AGR" id="SGD:S000006084"/>
<dbReference type="SGD" id="S000006084">
    <property type="gene designation" value="SVS1"/>
</dbReference>
<dbReference type="VEuPathDB" id="FungiDB:YPL163C"/>
<dbReference type="eggNOG" id="ENOG502SFPX">
    <property type="taxonomic scope" value="Eukaryota"/>
</dbReference>
<dbReference type="HOGENOM" id="CLU_095417_0_0_1"/>
<dbReference type="InParanoid" id="Q12254"/>
<dbReference type="OMA" id="NEYTTTY"/>
<dbReference type="OrthoDB" id="4070126at2759"/>
<dbReference type="BioCyc" id="YEAST:G3O-34059-MONOMER"/>
<dbReference type="BioGRID-ORCS" id="855940">
    <property type="hits" value="2 hits in 10 CRISPR screens"/>
</dbReference>
<dbReference type="PRO" id="PR:Q12254"/>
<dbReference type="Proteomes" id="UP000002311">
    <property type="component" value="Chromosome XVI"/>
</dbReference>
<dbReference type="RNAct" id="Q12254">
    <property type="molecule type" value="protein"/>
</dbReference>
<dbReference type="GO" id="GO:0071944">
    <property type="term" value="C:cell periphery"/>
    <property type="evidence" value="ECO:0007005"/>
    <property type="project" value="SGD"/>
</dbReference>
<dbReference type="GO" id="GO:0009277">
    <property type="term" value="C:fungal-type cell wall"/>
    <property type="evidence" value="ECO:0000314"/>
    <property type="project" value="SGD"/>
</dbReference>
<dbReference type="GO" id="GO:0000324">
    <property type="term" value="C:fungal-type vacuole"/>
    <property type="evidence" value="ECO:0007005"/>
    <property type="project" value="SGD"/>
</dbReference>
<gene>
    <name type="primary">SVS1</name>
    <name type="ordered locus">YPL163C</name>
    <name type="ORF">P2554</name>
</gene>